<name>ALCA_BORPA</name>
<dbReference type="EC" id="1.-.-.-"/>
<dbReference type="EMBL" id="BX640433">
    <property type="protein sequence ID" value="CAE38728.1"/>
    <property type="molecule type" value="Genomic_DNA"/>
</dbReference>
<dbReference type="RefSeq" id="WP_003814013.1">
    <property type="nucleotide sequence ID" value="NC_002928.3"/>
</dbReference>
<dbReference type="SMR" id="P65200"/>
<dbReference type="GeneID" id="93205229"/>
<dbReference type="KEGG" id="bpa:BPP3443"/>
<dbReference type="HOGENOM" id="CLU_020931_0_0_4"/>
<dbReference type="UniPathway" id="UPA00023"/>
<dbReference type="Proteomes" id="UP000001421">
    <property type="component" value="Chromosome"/>
</dbReference>
<dbReference type="GO" id="GO:0016491">
    <property type="term" value="F:oxidoreductase activity"/>
    <property type="evidence" value="ECO:0007669"/>
    <property type="project" value="UniProtKB-KW"/>
</dbReference>
<dbReference type="GO" id="GO:0009058">
    <property type="term" value="P:biosynthetic process"/>
    <property type="evidence" value="ECO:0007669"/>
    <property type="project" value="UniProtKB-ARBA"/>
</dbReference>
<dbReference type="Gene3D" id="3.50.50.60">
    <property type="entry name" value="FAD/NAD(P)-binding domain"/>
    <property type="match status" value="1"/>
</dbReference>
<dbReference type="InterPro" id="IPR036188">
    <property type="entry name" value="FAD/NAD-bd_sf"/>
</dbReference>
<dbReference type="InterPro" id="IPR025700">
    <property type="entry name" value="Lys/Orn_oxygenase"/>
</dbReference>
<dbReference type="PANTHER" id="PTHR42802:SF1">
    <property type="entry name" value="L-ORNITHINE N(5)-MONOOXYGENASE"/>
    <property type="match status" value="1"/>
</dbReference>
<dbReference type="PANTHER" id="PTHR42802">
    <property type="entry name" value="MONOOXYGENASE"/>
    <property type="match status" value="1"/>
</dbReference>
<dbReference type="Pfam" id="PF13434">
    <property type="entry name" value="Lys_Orn_oxgnase"/>
    <property type="match status" value="1"/>
</dbReference>
<dbReference type="SUPFAM" id="SSF51905">
    <property type="entry name" value="FAD/NAD(P)-binding domain"/>
    <property type="match status" value="1"/>
</dbReference>
<feature type="chain" id="PRO_0000204033" description="Alcaligin biosynthesis enzyme">
    <location>
        <begin position="1"/>
        <end position="461"/>
    </location>
</feature>
<feature type="binding site" evidence="2">
    <location>
        <begin position="9"/>
        <end position="15"/>
    </location>
    <ligand>
        <name>FAD</name>
        <dbReference type="ChEBI" id="CHEBI:57692"/>
    </ligand>
</feature>
<sequence length="461" mass="53026">MNREIYDFVAIGIGPFNLSLASLSAPLRGVRTLFLDKKSGFDWHPGMLIETSTLQNPFLADLVSLADPRSEYSYLNYCKLTNRIYSYYMRENHYLSRAEYTRYCQWVAARLPNLRFGCDVQGVLHDPESHSYLVTGQHTMSGQRFMFRCRKLVLGLGSQPYLPACCDRRAAPFIHSADYLRHKYELQGRASITIVGSGQSAAEVFHDLLRESGRHDYSLAWITRSPRFFQMENTKLTLELISPDYTEYFHDLPEARRQEILTQQNSLYKGINASLINQIYDLLDEKVHDGDNRYTLLTNSELRACRYDPLQERFQLDFQHLDCDRPFSHATDGLVLATGYSHEIPACINPIHDRIAWNADGSYRIGRNYAIDHEGSEIFVQNTGLLSHGVTNPDLGFCCYRNSQILRELTGTEHYRIETRTALQEFSPPADGVLKHRPARRAERRPTVAARPLMDIHRATL</sequence>
<evidence type="ECO:0000250" key="1"/>
<evidence type="ECO:0000255" key="2"/>
<evidence type="ECO:0000305" key="3"/>
<accession>P65200</accession>
<accession>P59855</accession>
<reference key="1">
    <citation type="journal article" date="2003" name="Nat. Genet.">
        <title>Comparative analysis of the genome sequences of Bordetella pertussis, Bordetella parapertussis and Bordetella bronchiseptica.</title>
        <authorList>
            <person name="Parkhill J."/>
            <person name="Sebaihia M."/>
            <person name="Preston A."/>
            <person name="Murphy L.D."/>
            <person name="Thomson N.R."/>
            <person name="Harris D.E."/>
            <person name="Holden M.T.G."/>
            <person name="Churcher C.M."/>
            <person name="Bentley S.D."/>
            <person name="Mungall K.L."/>
            <person name="Cerdeno-Tarraga A.-M."/>
            <person name="Temple L."/>
            <person name="James K.D."/>
            <person name="Harris B."/>
            <person name="Quail M.A."/>
            <person name="Achtman M."/>
            <person name="Atkin R."/>
            <person name="Baker S."/>
            <person name="Basham D."/>
            <person name="Bason N."/>
            <person name="Cherevach I."/>
            <person name="Chillingworth T."/>
            <person name="Collins M."/>
            <person name="Cronin A."/>
            <person name="Davis P."/>
            <person name="Doggett J."/>
            <person name="Feltwell T."/>
            <person name="Goble A."/>
            <person name="Hamlin N."/>
            <person name="Hauser H."/>
            <person name="Holroyd S."/>
            <person name="Jagels K."/>
            <person name="Leather S."/>
            <person name="Moule S."/>
            <person name="Norberczak H."/>
            <person name="O'Neil S."/>
            <person name="Ormond D."/>
            <person name="Price C."/>
            <person name="Rabbinowitsch E."/>
            <person name="Rutter S."/>
            <person name="Sanders M."/>
            <person name="Saunders D."/>
            <person name="Seeger K."/>
            <person name="Sharp S."/>
            <person name="Simmonds M."/>
            <person name="Skelton J."/>
            <person name="Squares R."/>
            <person name="Squares S."/>
            <person name="Stevens K."/>
            <person name="Unwin L."/>
            <person name="Whitehead S."/>
            <person name="Barrell B.G."/>
            <person name="Maskell D.J."/>
        </authorList>
    </citation>
    <scope>NUCLEOTIDE SEQUENCE [LARGE SCALE GENOMIC DNA]</scope>
    <source>
        <strain>12822 / ATCC BAA-587 / NCTC 13253</strain>
    </source>
</reference>
<keyword id="KW-0274">FAD</keyword>
<keyword id="KW-0285">Flavoprotein</keyword>
<keyword id="KW-0521">NADP</keyword>
<keyword id="KW-0560">Oxidoreductase</keyword>
<comment type="cofactor">
    <cofactor evidence="1">
        <name>FAD</name>
        <dbReference type="ChEBI" id="CHEBI:57692"/>
    </cofactor>
</comment>
<comment type="pathway">
    <text>Siderophore biosynthesis; alcaligin biosynthesis.</text>
</comment>
<comment type="similarity">
    <text evidence="3">Belongs to the lysine N(6)-hydroxylase/L-ornithine N(5)-oxygenase family.</text>
</comment>
<gene>
    <name type="primary">alcA</name>
    <name type="ordered locus">BPP3443</name>
</gene>
<protein>
    <recommendedName>
        <fullName>Alcaligin biosynthesis enzyme</fullName>
        <ecNumber>1.-.-.-</ecNumber>
    </recommendedName>
</protein>
<organism>
    <name type="scientific">Bordetella parapertussis (strain 12822 / ATCC BAA-587 / NCTC 13253)</name>
    <dbReference type="NCBI Taxonomy" id="257311"/>
    <lineage>
        <taxon>Bacteria</taxon>
        <taxon>Pseudomonadati</taxon>
        <taxon>Pseudomonadota</taxon>
        <taxon>Betaproteobacteria</taxon>
        <taxon>Burkholderiales</taxon>
        <taxon>Alcaligenaceae</taxon>
        <taxon>Bordetella</taxon>
    </lineage>
</organism>
<proteinExistence type="inferred from homology"/>